<protein>
    <recommendedName>
        <fullName evidence="1">Protein nucleotidyltransferase YdiU</fullName>
        <ecNumber evidence="1">2.7.7.-</ecNumber>
    </recommendedName>
    <alternativeName>
        <fullName evidence="1">Protein adenylyltransferase YdiU</fullName>
        <ecNumber evidence="1">2.7.7.108</ecNumber>
    </alternativeName>
    <alternativeName>
        <fullName evidence="1">Protein uridylyltransferase YdiU</fullName>
        <ecNumber evidence="1">2.7.7.-</ecNumber>
    </alternativeName>
</protein>
<reference key="1">
    <citation type="submission" date="2008-10" db="EMBL/GenBank/DDBJ databases">
        <title>Genome sequence of Bacillus cereus G9842.</title>
        <authorList>
            <person name="Dodson R.J."/>
            <person name="Durkin A.S."/>
            <person name="Rosovitz M.J."/>
            <person name="Rasko D.A."/>
            <person name="Hoffmaster A."/>
            <person name="Ravel J."/>
            <person name="Sutton G."/>
        </authorList>
    </citation>
    <scope>NUCLEOTIDE SEQUENCE [LARGE SCALE GENOMIC DNA]</scope>
    <source>
        <strain>G9842</strain>
    </source>
</reference>
<evidence type="ECO:0000255" key="1">
    <source>
        <dbReference type="HAMAP-Rule" id="MF_00692"/>
    </source>
</evidence>
<organism>
    <name type="scientific">Bacillus cereus (strain G9842)</name>
    <dbReference type="NCBI Taxonomy" id="405531"/>
    <lineage>
        <taxon>Bacteria</taxon>
        <taxon>Bacillati</taxon>
        <taxon>Bacillota</taxon>
        <taxon>Bacilli</taxon>
        <taxon>Bacillales</taxon>
        <taxon>Bacillaceae</taxon>
        <taxon>Bacillus</taxon>
        <taxon>Bacillus cereus group</taxon>
    </lineage>
</organism>
<gene>
    <name evidence="1" type="primary">ydiU</name>
    <name evidence="1" type="synonym">selO</name>
    <name type="ordered locus">BCG9842_B1740</name>
</gene>
<accession>B7IQN3</accession>
<sequence length="488" mass="55110">MTKNNETGWNLDNSYTTLPQSFYTEIPPTPVSSPELVKLNHSLAISLGLTPEELKKEAEIAIFAGNALPEGAHPLAQAYAGHQFGHFNMLGDGRALLIGEQITPSGERFDIQLKGSGPTPYSRRGDGRAALGPMLREYIISEAMYALDIPTTRSLAVVTTGEATYRETKLPGAILTRVASSHIRVGTFQYAAARGSIEDLKSLADYTIKRHYPEIEAHENRYTALLQEVIKRQASLIAKWQLVGFIHGVMNTDNITISGETIDYGPCAFMDNYNQGTVFSSIDTQGRYAYGNQPYMAAWDLARLAESLIPILHEDEEEALKIAQDEISKFSVQYENHWFLGMKKKLGLFSTEEQDQPLIEQLLKMMEKYKADYTNTFRSLTLDAIENTALFESPEYKDWYKLWQSRLKRQEQSKENAYEMMKNNNPSIIPRNHRVEEALEAAVTNDDYSVMEKLLEALSNPYAYSTDQEEYCIPPAPTNRPYRTFCGT</sequence>
<proteinExistence type="inferred from homology"/>
<dbReference type="EC" id="2.7.7.-" evidence="1"/>
<dbReference type="EC" id="2.7.7.108" evidence="1"/>
<dbReference type="EMBL" id="CP001186">
    <property type="protein sequence ID" value="ACK96975.1"/>
    <property type="molecule type" value="Genomic_DNA"/>
</dbReference>
<dbReference type="RefSeq" id="WP_000164912.1">
    <property type="nucleotide sequence ID" value="NC_011772.1"/>
</dbReference>
<dbReference type="SMR" id="B7IQN3"/>
<dbReference type="KEGG" id="bcg:BCG9842_B1740"/>
<dbReference type="HOGENOM" id="CLU_010245_4_1_9"/>
<dbReference type="Proteomes" id="UP000006744">
    <property type="component" value="Chromosome"/>
</dbReference>
<dbReference type="GO" id="GO:0070733">
    <property type="term" value="F:AMPylase activity"/>
    <property type="evidence" value="ECO:0007669"/>
    <property type="project" value="TreeGrafter"/>
</dbReference>
<dbReference type="GO" id="GO:0005524">
    <property type="term" value="F:ATP binding"/>
    <property type="evidence" value="ECO:0007669"/>
    <property type="project" value="UniProtKB-UniRule"/>
</dbReference>
<dbReference type="GO" id="GO:0000287">
    <property type="term" value="F:magnesium ion binding"/>
    <property type="evidence" value="ECO:0007669"/>
    <property type="project" value="UniProtKB-UniRule"/>
</dbReference>
<dbReference type="HAMAP" id="MF_00692">
    <property type="entry name" value="YdiU_SelO"/>
    <property type="match status" value="1"/>
</dbReference>
<dbReference type="InterPro" id="IPR003846">
    <property type="entry name" value="SelO"/>
</dbReference>
<dbReference type="NCBIfam" id="NF000658">
    <property type="entry name" value="PRK00029.1"/>
    <property type="match status" value="1"/>
</dbReference>
<dbReference type="PANTHER" id="PTHR32057">
    <property type="entry name" value="PROTEIN ADENYLYLTRANSFERASE SELO, MITOCHONDRIAL"/>
    <property type="match status" value="1"/>
</dbReference>
<dbReference type="PANTHER" id="PTHR32057:SF14">
    <property type="entry name" value="PROTEIN ADENYLYLTRANSFERASE SELO, MITOCHONDRIAL"/>
    <property type="match status" value="1"/>
</dbReference>
<dbReference type="Pfam" id="PF02696">
    <property type="entry name" value="SelO"/>
    <property type="match status" value="1"/>
</dbReference>
<feature type="chain" id="PRO_1000132087" description="Protein nucleotidyltransferase YdiU">
    <location>
        <begin position="1"/>
        <end position="488"/>
    </location>
</feature>
<feature type="active site" description="Proton acceptor" evidence="1">
    <location>
        <position position="253"/>
    </location>
</feature>
<feature type="binding site" evidence="1">
    <location>
        <position position="91"/>
    </location>
    <ligand>
        <name>ATP</name>
        <dbReference type="ChEBI" id="CHEBI:30616"/>
    </ligand>
</feature>
<feature type="binding site" evidence="1">
    <location>
        <position position="93"/>
    </location>
    <ligand>
        <name>ATP</name>
        <dbReference type="ChEBI" id="CHEBI:30616"/>
    </ligand>
</feature>
<feature type="binding site" evidence="1">
    <location>
        <position position="94"/>
    </location>
    <ligand>
        <name>ATP</name>
        <dbReference type="ChEBI" id="CHEBI:30616"/>
    </ligand>
</feature>
<feature type="binding site" evidence="1">
    <location>
        <position position="114"/>
    </location>
    <ligand>
        <name>ATP</name>
        <dbReference type="ChEBI" id="CHEBI:30616"/>
    </ligand>
</feature>
<feature type="binding site" evidence="1">
    <location>
        <position position="126"/>
    </location>
    <ligand>
        <name>ATP</name>
        <dbReference type="ChEBI" id="CHEBI:30616"/>
    </ligand>
</feature>
<feature type="binding site" evidence="1">
    <location>
        <position position="127"/>
    </location>
    <ligand>
        <name>ATP</name>
        <dbReference type="ChEBI" id="CHEBI:30616"/>
    </ligand>
</feature>
<feature type="binding site" evidence="1">
    <location>
        <position position="177"/>
    </location>
    <ligand>
        <name>ATP</name>
        <dbReference type="ChEBI" id="CHEBI:30616"/>
    </ligand>
</feature>
<feature type="binding site" evidence="1">
    <location>
        <position position="184"/>
    </location>
    <ligand>
        <name>ATP</name>
        <dbReference type="ChEBI" id="CHEBI:30616"/>
    </ligand>
</feature>
<feature type="binding site" evidence="1">
    <location>
        <position position="254"/>
    </location>
    <ligand>
        <name>Mg(2+)</name>
        <dbReference type="ChEBI" id="CHEBI:18420"/>
    </ligand>
</feature>
<feature type="binding site" evidence="1">
    <location>
        <position position="263"/>
    </location>
    <ligand>
        <name>ATP</name>
        <dbReference type="ChEBI" id="CHEBI:30616"/>
    </ligand>
</feature>
<feature type="binding site" evidence="1">
    <location>
        <position position="263"/>
    </location>
    <ligand>
        <name>Mg(2+)</name>
        <dbReference type="ChEBI" id="CHEBI:18420"/>
    </ligand>
</feature>
<name>SELO_BACC2</name>
<keyword id="KW-0067">ATP-binding</keyword>
<keyword id="KW-0460">Magnesium</keyword>
<keyword id="KW-0464">Manganese</keyword>
<keyword id="KW-0479">Metal-binding</keyword>
<keyword id="KW-0547">Nucleotide-binding</keyword>
<keyword id="KW-0548">Nucleotidyltransferase</keyword>
<keyword id="KW-0808">Transferase</keyword>
<comment type="function">
    <text evidence="1">Nucleotidyltransferase involved in the post-translational modification of proteins. It can catalyze the addition of adenosine monophosphate (AMP) or uridine monophosphate (UMP) to a protein, resulting in modifications known as AMPylation and UMPylation.</text>
</comment>
<comment type="catalytic activity">
    <reaction evidence="1">
        <text>L-seryl-[protein] + ATP = 3-O-(5'-adenylyl)-L-seryl-[protein] + diphosphate</text>
        <dbReference type="Rhea" id="RHEA:58120"/>
        <dbReference type="Rhea" id="RHEA-COMP:9863"/>
        <dbReference type="Rhea" id="RHEA-COMP:15073"/>
        <dbReference type="ChEBI" id="CHEBI:29999"/>
        <dbReference type="ChEBI" id="CHEBI:30616"/>
        <dbReference type="ChEBI" id="CHEBI:33019"/>
        <dbReference type="ChEBI" id="CHEBI:142516"/>
        <dbReference type="EC" id="2.7.7.108"/>
    </reaction>
</comment>
<comment type="catalytic activity">
    <reaction evidence="1">
        <text>L-threonyl-[protein] + ATP = 3-O-(5'-adenylyl)-L-threonyl-[protein] + diphosphate</text>
        <dbReference type="Rhea" id="RHEA:54292"/>
        <dbReference type="Rhea" id="RHEA-COMP:11060"/>
        <dbReference type="Rhea" id="RHEA-COMP:13847"/>
        <dbReference type="ChEBI" id="CHEBI:30013"/>
        <dbReference type="ChEBI" id="CHEBI:30616"/>
        <dbReference type="ChEBI" id="CHEBI:33019"/>
        <dbReference type="ChEBI" id="CHEBI:138113"/>
        <dbReference type="EC" id="2.7.7.108"/>
    </reaction>
</comment>
<comment type="catalytic activity">
    <reaction evidence="1">
        <text>L-tyrosyl-[protein] + ATP = O-(5'-adenylyl)-L-tyrosyl-[protein] + diphosphate</text>
        <dbReference type="Rhea" id="RHEA:54288"/>
        <dbReference type="Rhea" id="RHEA-COMP:10136"/>
        <dbReference type="Rhea" id="RHEA-COMP:13846"/>
        <dbReference type="ChEBI" id="CHEBI:30616"/>
        <dbReference type="ChEBI" id="CHEBI:33019"/>
        <dbReference type="ChEBI" id="CHEBI:46858"/>
        <dbReference type="ChEBI" id="CHEBI:83624"/>
        <dbReference type="EC" id="2.7.7.108"/>
    </reaction>
</comment>
<comment type="catalytic activity">
    <reaction evidence="1">
        <text>L-histidyl-[protein] + UTP = N(tele)-(5'-uridylyl)-L-histidyl-[protein] + diphosphate</text>
        <dbReference type="Rhea" id="RHEA:83891"/>
        <dbReference type="Rhea" id="RHEA-COMP:9745"/>
        <dbReference type="Rhea" id="RHEA-COMP:20239"/>
        <dbReference type="ChEBI" id="CHEBI:29979"/>
        <dbReference type="ChEBI" id="CHEBI:33019"/>
        <dbReference type="ChEBI" id="CHEBI:46398"/>
        <dbReference type="ChEBI" id="CHEBI:233474"/>
    </reaction>
</comment>
<comment type="catalytic activity">
    <reaction evidence="1">
        <text>L-seryl-[protein] + UTP = O-(5'-uridylyl)-L-seryl-[protein] + diphosphate</text>
        <dbReference type="Rhea" id="RHEA:64604"/>
        <dbReference type="Rhea" id="RHEA-COMP:9863"/>
        <dbReference type="Rhea" id="RHEA-COMP:16635"/>
        <dbReference type="ChEBI" id="CHEBI:29999"/>
        <dbReference type="ChEBI" id="CHEBI:33019"/>
        <dbReference type="ChEBI" id="CHEBI:46398"/>
        <dbReference type="ChEBI" id="CHEBI:156051"/>
    </reaction>
</comment>
<comment type="catalytic activity">
    <reaction evidence="1">
        <text>L-tyrosyl-[protein] + UTP = O-(5'-uridylyl)-L-tyrosyl-[protein] + diphosphate</text>
        <dbReference type="Rhea" id="RHEA:83887"/>
        <dbReference type="Rhea" id="RHEA-COMP:10136"/>
        <dbReference type="Rhea" id="RHEA-COMP:20238"/>
        <dbReference type="ChEBI" id="CHEBI:33019"/>
        <dbReference type="ChEBI" id="CHEBI:46398"/>
        <dbReference type="ChEBI" id="CHEBI:46858"/>
        <dbReference type="ChEBI" id="CHEBI:90602"/>
    </reaction>
</comment>
<comment type="cofactor">
    <cofactor evidence="1">
        <name>Mg(2+)</name>
        <dbReference type="ChEBI" id="CHEBI:18420"/>
    </cofactor>
    <cofactor evidence="1">
        <name>Mn(2+)</name>
        <dbReference type="ChEBI" id="CHEBI:29035"/>
    </cofactor>
</comment>
<comment type="similarity">
    <text evidence="1">Belongs to the SELO family.</text>
</comment>